<organism>
    <name type="scientific">Shewanella baltica (strain OS195)</name>
    <dbReference type="NCBI Taxonomy" id="399599"/>
    <lineage>
        <taxon>Bacteria</taxon>
        <taxon>Pseudomonadati</taxon>
        <taxon>Pseudomonadota</taxon>
        <taxon>Gammaproteobacteria</taxon>
        <taxon>Alteromonadales</taxon>
        <taxon>Shewanellaceae</taxon>
        <taxon>Shewanella</taxon>
    </lineage>
</organism>
<sequence>MKFKQDFFTQLPEFYSQVYPQGITKPEWLAWSDDAAQLIGLSQPTDELLLGLSGNTAVDGATYYAQVYSGHQFGGYTPRLGDGRSIILGEAIGPNGVWDVALKGGGPTPYSRRGDGRAVMRSAVREFLVSEALHHLHVPTTRALAVIGSDLPVWRESQETAAITVRLARSHIRFGHFEFFCHSERGRADKLIQLLNFTITQHYPHLSCDAAGYKAWFLQVVQDTAKMIAHWQAVGFAHGVMNTDNMSILGDSFDFGPFAFLDTFQEDFICNHSDPEGRYAFGQQPGVGLWNLQRLAQALTPVIPSDDLIAILNQYQEALVQPYLRLMRAKLGLSAVDVPSVEQDKQDLDLIGRFTVLMEKNQLDYTQTWRQLGKLDPTSKHSALRDDFIDVSQFDTWYQAYQLRLGAVADIPAWQTERNSVNPKYILRNYLAQEAIIAVEEGNLAPLHLLQKILTQPFAEHADHEDLAKRPPDWGQGLIMSCSS</sequence>
<proteinExistence type="inferred from homology"/>
<keyword id="KW-0067">ATP-binding</keyword>
<keyword id="KW-0460">Magnesium</keyword>
<keyword id="KW-0464">Manganese</keyword>
<keyword id="KW-0479">Metal-binding</keyword>
<keyword id="KW-0547">Nucleotide-binding</keyword>
<keyword id="KW-0548">Nucleotidyltransferase</keyword>
<keyword id="KW-0808">Transferase</keyword>
<evidence type="ECO:0000255" key="1">
    <source>
        <dbReference type="HAMAP-Rule" id="MF_00692"/>
    </source>
</evidence>
<dbReference type="EC" id="2.7.7.-" evidence="1"/>
<dbReference type="EC" id="2.7.7.108" evidence="1"/>
<dbReference type="EMBL" id="CP000891">
    <property type="protein sequence ID" value="ABX51315.1"/>
    <property type="molecule type" value="Genomic_DNA"/>
</dbReference>
<dbReference type="RefSeq" id="WP_012197743.1">
    <property type="nucleotide sequence ID" value="NC_009997.1"/>
</dbReference>
<dbReference type="SMR" id="A9L650"/>
<dbReference type="KEGG" id="sbn:Sbal195_4156"/>
<dbReference type="HOGENOM" id="CLU_010245_4_1_6"/>
<dbReference type="Proteomes" id="UP000000770">
    <property type="component" value="Chromosome"/>
</dbReference>
<dbReference type="GO" id="GO:0070733">
    <property type="term" value="F:AMPylase activity"/>
    <property type="evidence" value="ECO:0007669"/>
    <property type="project" value="TreeGrafter"/>
</dbReference>
<dbReference type="GO" id="GO:0005524">
    <property type="term" value="F:ATP binding"/>
    <property type="evidence" value="ECO:0007669"/>
    <property type="project" value="UniProtKB-UniRule"/>
</dbReference>
<dbReference type="GO" id="GO:0000287">
    <property type="term" value="F:magnesium ion binding"/>
    <property type="evidence" value="ECO:0007669"/>
    <property type="project" value="UniProtKB-UniRule"/>
</dbReference>
<dbReference type="HAMAP" id="MF_00692">
    <property type="entry name" value="YdiU_SelO"/>
    <property type="match status" value="1"/>
</dbReference>
<dbReference type="InterPro" id="IPR003846">
    <property type="entry name" value="SelO"/>
</dbReference>
<dbReference type="NCBIfam" id="NF000658">
    <property type="entry name" value="PRK00029.1"/>
    <property type="match status" value="1"/>
</dbReference>
<dbReference type="PANTHER" id="PTHR32057">
    <property type="entry name" value="PROTEIN ADENYLYLTRANSFERASE SELO, MITOCHONDRIAL"/>
    <property type="match status" value="1"/>
</dbReference>
<dbReference type="PANTHER" id="PTHR32057:SF14">
    <property type="entry name" value="PROTEIN ADENYLYLTRANSFERASE SELO, MITOCHONDRIAL"/>
    <property type="match status" value="1"/>
</dbReference>
<dbReference type="Pfam" id="PF02696">
    <property type="entry name" value="SelO"/>
    <property type="match status" value="1"/>
</dbReference>
<protein>
    <recommendedName>
        <fullName evidence="1">Protein nucleotidyltransferase YdiU</fullName>
        <ecNumber evidence="1">2.7.7.-</ecNumber>
    </recommendedName>
    <alternativeName>
        <fullName evidence="1">Protein adenylyltransferase YdiU</fullName>
        <ecNumber evidence="1">2.7.7.108</ecNumber>
    </alternativeName>
    <alternativeName>
        <fullName evidence="1">Protein uridylyltransferase YdiU</fullName>
        <ecNumber evidence="1">2.7.7.-</ecNumber>
    </alternativeName>
</protein>
<name>SELO_SHEB9</name>
<feature type="chain" id="PRO_1000083137" description="Protein nucleotidyltransferase YdiU">
    <location>
        <begin position="1"/>
        <end position="484"/>
    </location>
</feature>
<feature type="active site" description="Proton acceptor" evidence="1">
    <location>
        <position position="244"/>
    </location>
</feature>
<feature type="binding site" evidence="1">
    <location>
        <position position="81"/>
    </location>
    <ligand>
        <name>ATP</name>
        <dbReference type="ChEBI" id="CHEBI:30616"/>
    </ligand>
</feature>
<feature type="binding site" evidence="1">
    <location>
        <position position="83"/>
    </location>
    <ligand>
        <name>ATP</name>
        <dbReference type="ChEBI" id="CHEBI:30616"/>
    </ligand>
</feature>
<feature type="binding site" evidence="1">
    <location>
        <position position="84"/>
    </location>
    <ligand>
        <name>ATP</name>
        <dbReference type="ChEBI" id="CHEBI:30616"/>
    </ligand>
</feature>
<feature type="binding site" evidence="1">
    <location>
        <position position="103"/>
    </location>
    <ligand>
        <name>ATP</name>
        <dbReference type="ChEBI" id="CHEBI:30616"/>
    </ligand>
</feature>
<feature type="binding site" evidence="1">
    <location>
        <position position="115"/>
    </location>
    <ligand>
        <name>ATP</name>
        <dbReference type="ChEBI" id="CHEBI:30616"/>
    </ligand>
</feature>
<feature type="binding site" evidence="1">
    <location>
        <position position="116"/>
    </location>
    <ligand>
        <name>ATP</name>
        <dbReference type="ChEBI" id="CHEBI:30616"/>
    </ligand>
</feature>
<feature type="binding site" evidence="1">
    <location>
        <position position="166"/>
    </location>
    <ligand>
        <name>ATP</name>
        <dbReference type="ChEBI" id="CHEBI:30616"/>
    </ligand>
</feature>
<feature type="binding site" evidence="1">
    <location>
        <position position="173"/>
    </location>
    <ligand>
        <name>ATP</name>
        <dbReference type="ChEBI" id="CHEBI:30616"/>
    </ligand>
</feature>
<feature type="binding site" evidence="1">
    <location>
        <position position="245"/>
    </location>
    <ligand>
        <name>Mg(2+)</name>
        <dbReference type="ChEBI" id="CHEBI:18420"/>
    </ligand>
</feature>
<feature type="binding site" evidence="1">
    <location>
        <position position="254"/>
    </location>
    <ligand>
        <name>ATP</name>
        <dbReference type="ChEBI" id="CHEBI:30616"/>
    </ligand>
</feature>
<feature type="binding site" evidence="1">
    <location>
        <position position="254"/>
    </location>
    <ligand>
        <name>Mg(2+)</name>
        <dbReference type="ChEBI" id="CHEBI:18420"/>
    </ligand>
</feature>
<accession>A9L650</accession>
<comment type="function">
    <text evidence="1">Nucleotidyltransferase involved in the post-translational modification of proteins. It can catalyze the addition of adenosine monophosphate (AMP) or uridine monophosphate (UMP) to a protein, resulting in modifications known as AMPylation and UMPylation.</text>
</comment>
<comment type="catalytic activity">
    <reaction evidence="1">
        <text>L-seryl-[protein] + ATP = 3-O-(5'-adenylyl)-L-seryl-[protein] + diphosphate</text>
        <dbReference type="Rhea" id="RHEA:58120"/>
        <dbReference type="Rhea" id="RHEA-COMP:9863"/>
        <dbReference type="Rhea" id="RHEA-COMP:15073"/>
        <dbReference type="ChEBI" id="CHEBI:29999"/>
        <dbReference type="ChEBI" id="CHEBI:30616"/>
        <dbReference type="ChEBI" id="CHEBI:33019"/>
        <dbReference type="ChEBI" id="CHEBI:142516"/>
        <dbReference type="EC" id="2.7.7.108"/>
    </reaction>
</comment>
<comment type="catalytic activity">
    <reaction evidence="1">
        <text>L-threonyl-[protein] + ATP = 3-O-(5'-adenylyl)-L-threonyl-[protein] + diphosphate</text>
        <dbReference type="Rhea" id="RHEA:54292"/>
        <dbReference type="Rhea" id="RHEA-COMP:11060"/>
        <dbReference type="Rhea" id="RHEA-COMP:13847"/>
        <dbReference type="ChEBI" id="CHEBI:30013"/>
        <dbReference type="ChEBI" id="CHEBI:30616"/>
        <dbReference type="ChEBI" id="CHEBI:33019"/>
        <dbReference type="ChEBI" id="CHEBI:138113"/>
        <dbReference type="EC" id="2.7.7.108"/>
    </reaction>
</comment>
<comment type="catalytic activity">
    <reaction evidence="1">
        <text>L-tyrosyl-[protein] + ATP = O-(5'-adenylyl)-L-tyrosyl-[protein] + diphosphate</text>
        <dbReference type="Rhea" id="RHEA:54288"/>
        <dbReference type="Rhea" id="RHEA-COMP:10136"/>
        <dbReference type="Rhea" id="RHEA-COMP:13846"/>
        <dbReference type="ChEBI" id="CHEBI:30616"/>
        <dbReference type="ChEBI" id="CHEBI:33019"/>
        <dbReference type="ChEBI" id="CHEBI:46858"/>
        <dbReference type="ChEBI" id="CHEBI:83624"/>
        <dbReference type="EC" id="2.7.7.108"/>
    </reaction>
</comment>
<comment type="catalytic activity">
    <reaction evidence="1">
        <text>L-histidyl-[protein] + UTP = N(tele)-(5'-uridylyl)-L-histidyl-[protein] + diphosphate</text>
        <dbReference type="Rhea" id="RHEA:83891"/>
        <dbReference type="Rhea" id="RHEA-COMP:9745"/>
        <dbReference type="Rhea" id="RHEA-COMP:20239"/>
        <dbReference type="ChEBI" id="CHEBI:29979"/>
        <dbReference type="ChEBI" id="CHEBI:33019"/>
        <dbReference type="ChEBI" id="CHEBI:46398"/>
        <dbReference type="ChEBI" id="CHEBI:233474"/>
    </reaction>
</comment>
<comment type="catalytic activity">
    <reaction evidence="1">
        <text>L-seryl-[protein] + UTP = O-(5'-uridylyl)-L-seryl-[protein] + diphosphate</text>
        <dbReference type="Rhea" id="RHEA:64604"/>
        <dbReference type="Rhea" id="RHEA-COMP:9863"/>
        <dbReference type="Rhea" id="RHEA-COMP:16635"/>
        <dbReference type="ChEBI" id="CHEBI:29999"/>
        <dbReference type="ChEBI" id="CHEBI:33019"/>
        <dbReference type="ChEBI" id="CHEBI:46398"/>
        <dbReference type="ChEBI" id="CHEBI:156051"/>
    </reaction>
</comment>
<comment type="catalytic activity">
    <reaction evidence="1">
        <text>L-tyrosyl-[protein] + UTP = O-(5'-uridylyl)-L-tyrosyl-[protein] + diphosphate</text>
        <dbReference type="Rhea" id="RHEA:83887"/>
        <dbReference type="Rhea" id="RHEA-COMP:10136"/>
        <dbReference type="Rhea" id="RHEA-COMP:20238"/>
        <dbReference type="ChEBI" id="CHEBI:33019"/>
        <dbReference type="ChEBI" id="CHEBI:46398"/>
        <dbReference type="ChEBI" id="CHEBI:46858"/>
        <dbReference type="ChEBI" id="CHEBI:90602"/>
    </reaction>
</comment>
<comment type="cofactor">
    <cofactor evidence="1">
        <name>Mg(2+)</name>
        <dbReference type="ChEBI" id="CHEBI:18420"/>
    </cofactor>
    <cofactor evidence="1">
        <name>Mn(2+)</name>
        <dbReference type="ChEBI" id="CHEBI:29035"/>
    </cofactor>
</comment>
<comment type="similarity">
    <text evidence="1">Belongs to the SELO family.</text>
</comment>
<reference key="1">
    <citation type="submission" date="2007-11" db="EMBL/GenBank/DDBJ databases">
        <title>Complete sequence of chromosome of Shewanella baltica OS195.</title>
        <authorList>
            <consortium name="US DOE Joint Genome Institute"/>
            <person name="Copeland A."/>
            <person name="Lucas S."/>
            <person name="Lapidus A."/>
            <person name="Barry K."/>
            <person name="Glavina del Rio T."/>
            <person name="Dalin E."/>
            <person name="Tice H."/>
            <person name="Pitluck S."/>
            <person name="Chain P."/>
            <person name="Malfatti S."/>
            <person name="Shin M."/>
            <person name="Vergez L."/>
            <person name="Schmutz J."/>
            <person name="Larimer F."/>
            <person name="Land M."/>
            <person name="Hauser L."/>
            <person name="Kyrpides N."/>
            <person name="Kim E."/>
            <person name="Brettar I."/>
            <person name="Rodrigues J."/>
            <person name="Konstantinidis K."/>
            <person name="Klappenbach J."/>
            <person name="Hofle M."/>
            <person name="Tiedje J."/>
            <person name="Richardson P."/>
        </authorList>
    </citation>
    <scope>NUCLEOTIDE SEQUENCE [LARGE SCALE GENOMIC DNA]</scope>
    <source>
        <strain>OS195</strain>
    </source>
</reference>
<gene>
    <name evidence="1" type="primary">ydiU</name>
    <name evidence="1" type="synonym">selO</name>
    <name type="ordered locus">Sbal195_4156</name>
</gene>